<dbReference type="EC" id="5.4.3.8" evidence="1"/>
<dbReference type="EMBL" id="CP001175">
    <property type="protein sequence ID" value="ACK39364.1"/>
    <property type="molecule type" value="Genomic_DNA"/>
</dbReference>
<dbReference type="RefSeq" id="WP_003736696.1">
    <property type="nucleotide sequence ID" value="NC_011660.1"/>
</dbReference>
<dbReference type="SMR" id="B8DHJ5"/>
<dbReference type="KEGG" id="lmh:LMHCC_1016"/>
<dbReference type="HOGENOM" id="CLU_016922_1_5_9"/>
<dbReference type="UniPathway" id="UPA00251">
    <property type="reaction ID" value="UER00317"/>
</dbReference>
<dbReference type="GO" id="GO:0005737">
    <property type="term" value="C:cytoplasm"/>
    <property type="evidence" value="ECO:0007669"/>
    <property type="project" value="UniProtKB-SubCell"/>
</dbReference>
<dbReference type="GO" id="GO:0042286">
    <property type="term" value="F:glutamate-1-semialdehyde 2,1-aminomutase activity"/>
    <property type="evidence" value="ECO:0007669"/>
    <property type="project" value="UniProtKB-UniRule"/>
</dbReference>
<dbReference type="GO" id="GO:0030170">
    <property type="term" value="F:pyridoxal phosphate binding"/>
    <property type="evidence" value="ECO:0007669"/>
    <property type="project" value="InterPro"/>
</dbReference>
<dbReference type="GO" id="GO:0008483">
    <property type="term" value="F:transaminase activity"/>
    <property type="evidence" value="ECO:0007669"/>
    <property type="project" value="InterPro"/>
</dbReference>
<dbReference type="GO" id="GO:0006782">
    <property type="term" value="P:protoporphyrinogen IX biosynthetic process"/>
    <property type="evidence" value="ECO:0007669"/>
    <property type="project" value="UniProtKB-UniRule"/>
</dbReference>
<dbReference type="CDD" id="cd00610">
    <property type="entry name" value="OAT_like"/>
    <property type="match status" value="1"/>
</dbReference>
<dbReference type="FunFam" id="3.40.640.10:FF:000021">
    <property type="entry name" value="Glutamate-1-semialdehyde 2,1-aminomutase"/>
    <property type="match status" value="1"/>
</dbReference>
<dbReference type="Gene3D" id="3.90.1150.10">
    <property type="entry name" value="Aspartate Aminotransferase, domain 1"/>
    <property type="match status" value="1"/>
</dbReference>
<dbReference type="Gene3D" id="3.40.640.10">
    <property type="entry name" value="Type I PLP-dependent aspartate aminotransferase-like (Major domain)"/>
    <property type="match status" value="1"/>
</dbReference>
<dbReference type="HAMAP" id="MF_00375">
    <property type="entry name" value="HemL_aminotrans_3"/>
    <property type="match status" value="1"/>
</dbReference>
<dbReference type="InterPro" id="IPR004639">
    <property type="entry name" value="4pyrrol_synth_GluAld_NH2Trfase"/>
</dbReference>
<dbReference type="InterPro" id="IPR005814">
    <property type="entry name" value="Aminotrans_3"/>
</dbReference>
<dbReference type="InterPro" id="IPR049704">
    <property type="entry name" value="Aminotrans_3_PPA_site"/>
</dbReference>
<dbReference type="InterPro" id="IPR015424">
    <property type="entry name" value="PyrdxlP-dep_Trfase"/>
</dbReference>
<dbReference type="InterPro" id="IPR015421">
    <property type="entry name" value="PyrdxlP-dep_Trfase_major"/>
</dbReference>
<dbReference type="InterPro" id="IPR015422">
    <property type="entry name" value="PyrdxlP-dep_Trfase_small"/>
</dbReference>
<dbReference type="NCBIfam" id="TIGR00713">
    <property type="entry name" value="hemL"/>
    <property type="match status" value="1"/>
</dbReference>
<dbReference type="NCBIfam" id="NF000818">
    <property type="entry name" value="PRK00062.1"/>
    <property type="match status" value="1"/>
</dbReference>
<dbReference type="PANTHER" id="PTHR43713">
    <property type="entry name" value="GLUTAMATE-1-SEMIALDEHYDE 2,1-AMINOMUTASE"/>
    <property type="match status" value="1"/>
</dbReference>
<dbReference type="PANTHER" id="PTHR43713:SF3">
    <property type="entry name" value="GLUTAMATE-1-SEMIALDEHYDE 2,1-AMINOMUTASE 1, CHLOROPLASTIC-RELATED"/>
    <property type="match status" value="1"/>
</dbReference>
<dbReference type="Pfam" id="PF00202">
    <property type="entry name" value="Aminotran_3"/>
    <property type="match status" value="1"/>
</dbReference>
<dbReference type="SUPFAM" id="SSF53383">
    <property type="entry name" value="PLP-dependent transferases"/>
    <property type="match status" value="1"/>
</dbReference>
<dbReference type="PROSITE" id="PS00600">
    <property type="entry name" value="AA_TRANSFER_CLASS_3"/>
    <property type="match status" value="1"/>
</dbReference>
<evidence type="ECO:0000255" key="1">
    <source>
        <dbReference type="HAMAP-Rule" id="MF_00375"/>
    </source>
</evidence>
<accession>B8DHJ5</accession>
<keyword id="KW-0963">Cytoplasm</keyword>
<keyword id="KW-0413">Isomerase</keyword>
<keyword id="KW-0627">Porphyrin biosynthesis</keyword>
<keyword id="KW-0663">Pyridoxal phosphate</keyword>
<proteinExistence type="inferred from homology"/>
<organism>
    <name type="scientific">Listeria monocytogenes serotype 4a (strain HCC23)</name>
    <dbReference type="NCBI Taxonomy" id="552536"/>
    <lineage>
        <taxon>Bacteria</taxon>
        <taxon>Bacillati</taxon>
        <taxon>Bacillota</taxon>
        <taxon>Bacilli</taxon>
        <taxon>Bacillales</taxon>
        <taxon>Listeriaceae</taxon>
        <taxon>Listeria</taxon>
    </lineage>
</organism>
<sequence>MQIYSKSEKAFKEAKKVLPGGVNSPVRAFNSVDASPVFMDHGKGAYITDIDGNEYIDYVLSWGPLILGHANPSVVQAITNAAMKGTSFGTPTEIETELAKLVIERVPSIEIVRMVSSGTEATMSAIRLARGYTKREKILKFEGSYHGHGDSLLIKAGSGVATLGLPDSPGVTKGLAADTITVPYNDIEGAKLAFEKYGEEIAAVIVEPVAGNMGVVPPIEGFLEGLRELTTNYGSLLIFDEVMTGFRVDYYSAQGYYVVTPDLTCLGKVIGGGLPVGAYGGKKEIMEQIAPAGSIYQAGTLSGNPLAMNAGFETVRQLTPQDYDVFRTLIKRMEEGLTEISARRQVPLSINKAGSMFGFFFTDQKVTNFDTAKTSDLEFFRSYYREMLGQGIFLPPSQFEGVFISTMHTEKEIDKTLDAFDTTCKILRG</sequence>
<protein>
    <recommendedName>
        <fullName evidence="1">Glutamate-1-semialdehyde 2,1-aminomutase 2</fullName>
        <shortName evidence="1">GSA 2</shortName>
        <ecNumber evidence="1">5.4.3.8</ecNumber>
    </recommendedName>
    <alternativeName>
        <fullName evidence="1">Glutamate-1-semialdehyde aminotransferase 2</fullName>
        <shortName evidence="1">GSA-AT 2</shortName>
    </alternativeName>
</protein>
<comment type="catalytic activity">
    <reaction evidence="1">
        <text>(S)-4-amino-5-oxopentanoate = 5-aminolevulinate</text>
        <dbReference type="Rhea" id="RHEA:14265"/>
        <dbReference type="ChEBI" id="CHEBI:57501"/>
        <dbReference type="ChEBI" id="CHEBI:356416"/>
        <dbReference type="EC" id="5.4.3.8"/>
    </reaction>
</comment>
<comment type="cofactor">
    <cofactor evidence="1">
        <name>pyridoxal 5'-phosphate</name>
        <dbReference type="ChEBI" id="CHEBI:597326"/>
    </cofactor>
</comment>
<comment type="pathway">
    <text evidence="1">Porphyrin-containing compound metabolism; protoporphyrin-IX biosynthesis; 5-aminolevulinate from L-glutamyl-tRNA(Glu): step 2/2.</text>
</comment>
<comment type="subunit">
    <text evidence="1">Homodimer.</text>
</comment>
<comment type="subcellular location">
    <subcellularLocation>
        <location evidence="1">Cytoplasm</location>
    </subcellularLocation>
</comment>
<comment type="similarity">
    <text evidence="1">Belongs to the class-III pyridoxal-phosphate-dependent aminotransferase family. HemL subfamily.</text>
</comment>
<gene>
    <name evidence="1" type="primary">hemL2</name>
    <name type="ordered locus">LMHCC_1016</name>
</gene>
<reference key="1">
    <citation type="journal article" date="2011" name="J. Bacteriol.">
        <title>Genome sequence of lineage III Listeria monocytogenes strain HCC23.</title>
        <authorList>
            <person name="Steele C.L."/>
            <person name="Donaldson J.R."/>
            <person name="Paul D."/>
            <person name="Banes M.M."/>
            <person name="Arick T."/>
            <person name="Bridges S.M."/>
            <person name="Lawrence M.L."/>
        </authorList>
    </citation>
    <scope>NUCLEOTIDE SEQUENCE [LARGE SCALE GENOMIC DNA]</scope>
    <source>
        <strain>HCC23</strain>
    </source>
</reference>
<name>GSA2_LISMH</name>
<feature type="chain" id="PRO_0000382333" description="Glutamate-1-semialdehyde 2,1-aminomutase 2">
    <location>
        <begin position="1"/>
        <end position="429"/>
    </location>
</feature>
<feature type="modified residue" description="N6-(pyridoxal phosphate)lysine" evidence="1">
    <location>
        <position position="268"/>
    </location>
</feature>